<proteinExistence type="evidence at protein level"/>
<organism>
    <name type="scientific">Homo sapiens</name>
    <name type="common">Human</name>
    <dbReference type="NCBI Taxonomy" id="9606"/>
    <lineage>
        <taxon>Eukaryota</taxon>
        <taxon>Metazoa</taxon>
        <taxon>Chordata</taxon>
        <taxon>Craniata</taxon>
        <taxon>Vertebrata</taxon>
        <taxon>Euteleostomi</taxon>
        <taxon>Mammalia</taxon>
        <taxon>Eutheria</taxon>
        <taxon>Euarchontoglires</taxon>
        <taxon>Primates</taxon>
        <taxon>Haplorrhini</taxon>
        <taxon>Catarrhini</taxon>
        <taxon>Hominidae</taxon>
        <taxon>Homo</taxon>
    </lineage>
</organism>
<reference key="1">
    <citation type="submission" date="1999-11" db="EMBL/GenBank/DDBJ databases">
        <authorList>
            <person name="Mashima H."/>
            <person name="Horikawa Y."/>
            <person name="Cox N.J."/>
            <person name="Bell G.I."/>
        </authorList>
    </citation>
    <scope>NUCLEOTIDE SEQUENCE [GENOMIC DNA / MRNA] (ISOFORM 1)</scope>
</reference>
<reference key="2">
    <citation type="journal article" date="2004" name="Nat. Genet.">
        <title>Complete sequencing and characterization of 21,243 full-length human cDNAs.</title>
        <authorList>
            <person name="Ota T."/>
            <person name="Suzuki Y."/>
            <person name="Nishikawa T."/>
            <person name="Otsuki T."/>
            <person name="Sugiyama T."/>
            <person name="Irie R."/>
            <person name="Wakamatsu A."/>
            <person name="Hayashi K."/>
            <person name="Sato H."/>
            <person name="Nagai K."/>
            <person name="Kimura K."/>
            <person name="Makita H."/>
            <person name="Sekine M."/>
            <person name="Obayashi M."/>
            <person name="Nishi T."/>
            <person name="Shibahara T."/>
            <person name="Tanaka T."/>
            <person name="Ishii S."/>
            <person name="Yamamoto J."/>
            <person name="Saito K."/>
            <person name="Kawai Y."/>
            <person name="Isono Y."/>
            <person name="Nakamura Y."/>
            <person name="Nagahari K."/>
            <person name="Murakami K."/>
            <person name="Yasuda T."/>
            <person name="Iwayanagi T."/>
            <person name="Wagatsuma M."/>
            <person name="Shiratori A."/>
            <person name="Sudo H."/>
            <person name="Hosoiri T."/>
            <person name="Kaku Y."/>
            <person name="Kodaira H."/>
            <person name="Kondo H."/>
            <person name="Sugawara M."/>
            <person name="Takahashi M."/>
            <person name="Kanda K."/>
            <person name="Yokoi T."/>
            <person name="Furuya T."/>
            <person name="Kikkawa E."/>
            <person name="Omura Y."/>
            <person name="Abe K."/>
            <person name="Kamihara K."/>
            <person name="Katsuta N."/>
            <person name="Sato K."/>
            <person name="Tanikawa M."/>
            <person name="Yamazaki M."/>
            <person name="Ninomiya K."/>
            <person name="Ishibashi T."/>
            <person name="Yamashita H."/>
            <person name="Murakawa K."/>
            <person name="Fujimori K."/>
            <person name="Tanai H."/>
            <person name="Kimata M."/>
            <person name="Watanabe M."/>
            <person name="Hiraoka S."/>
            <person name="Chiba Y."/>
            <person name="Ishida S."/>
            <person name="Ono Y."/>
            <person name="Takiguchi S."/>
            <person name="Watanabe S."/>
            <person name="Yosida M."/>
            <person name="Hotuta T."/>
            <person name="Kusano J."/>
            <person name="Kanehori K."/>
            <person name="Takahashi-Fujii A."/>
            <person name="Hara H."/>
            <person name="Tanase T.-O."/>
            <person name="Nomura Y."/>
            <person name="Togiya S."/>
            <person name="Komai F."/>
            <person name="Hara R."/>
            <person name="Takeuchi K."/>
            <person name="Arita M."/>
            <person name="Imose N."/>
            <person name="Musashino K."/>
            <person name="Yuuki H."/>
            <person name="Oshima A."/>
            <person name="Sasaki N."/>
            <person name="Aotsuka S."/>
            <person name="Yoshikawa Y."/>
            <person name="Matsunawa H."/>
            <person name="Ichihara T."/>
            <person name="Shiohata N."/>
            <person name="Sano S."/>
            <person name="Moriya S."/>
            <person name="Momiyama H."/>
            <person name="Satoh N."/>
            <person name="Takami S."/>
            <person name="Terashima Y."/>
            <person name="Suzuki O."/>
            <person name="Nakagawa S."/>
            <person name="Senoh A."/>
            <person name="Mizoguchi H."/>
            <person name="Goto Y."/>
            <person name="Shimizu F."/>
            <person name="Wakebe H."/>
            <person name="Hishigaki H."/>
            <person name="Watanabe T."/>
            <person name="Sugiyama A."/>
            <person name="Takemoto M."/>
            <person name="Kawakami B."/>
            <person name="Yamazaki M."/>
            <person name="Watanabe K."/>
            <person name="Kumagai A."/>
            <person name="Itakura S."/>
            <person name="Fukuzumi Y."/>
            <person name="Fujimori Y."/>
            <person name="Komiyama M."/>
            <person name="Tashiro H."/>
            <person name="Tanigami A."/>
            <person name="Fujiwara T."/>
            <person name="Ono T."/>
            <person name="Yamada K."/>
            <person name="Fujii Y."/>
            <person name="Ozaki K."/>
            <person name="Hirao M."/>
            <person name="Ohmori Y."/>
            <person name="Kawabata A."/>
            <person name="Hikiji T."/>
            <person name="Kobatake N."/>
            <person name="Inagaki H."/>
            <person name="Ikema Y."/>
            <person name="Okamoto S."/>
            <person name="Okitani R."/>
            <person name="Kawakami T."/>
            <person name="Noguchi S."/>
            <person name="Itoh T."/>
            <person name="Shigeta K."/>
            <person name="Senba T."/>
            <person name="Matsumura K."/>
            <person name="Nakajima Y."/>
            <person name="Mizuno T."/>
            <person name="Morinaga M."/>
            <person name="Sasaki M."/>
            <person name="Togashi T."/>
            <person name="Oyama M."/>
            <person name="Hata H."/>
            <person name="Watanabe M."/>
            <person name="Komatsu T."/>
            <person name="Mizushima-Sugano J."/>
            <person name="Satoh T."/>
            <person name="Shirai Y."/>
            <person name="Takahashi Y."/>
            <person name="Nakagawa K."/>
            <person name="Okumura K."/>
            <person name="Nagase T."/>
            <person name="Nomura N."/>
            <person name="Kikuchi H."/>
            <person name="Masuho Y."/>
            <person name="Yamashita R."/>
            <person name="Nakai K."/>
            <person name="Yada T."/>
            <person name="Nakamura Y."/>
            <person name="Ohara O."/>
            <person name="Isogai T."/>
            <person name="Sugano S."/>
        </authorList>
    </citation>
    <scope>NUCLEOTIDE SEQUENCE [LARGE SCALE MRNA] (ISOFORM 2)</scope>
    <scope>NUCLEOTIDE SEQUENCE [LARGE SCALE MRNA] OF 256-1033 AND 1604-1883 (ISOFORM 1)</scope>
    <source>
        <tissue>Testis</tissue>
    </source>
</reference>
<reference key="3">
    <citation type="journal article" date="2006" name="Nature">
        <title>Analysis of the DNA sequence and duplication history of human chromosome 15.</title>
        <authorList>
            <person name="Zody M.C."/>
            <person name="Garber M."/>
            <person name="Sharpe T."/>
            <person name="Young S.K."/>
            <person name="Rowen L."/>
            <person name="O'Neill K."/>
            <person name="Whittaker C.A."/>
            <person name="Kamal M."/>
            <person name="Chang J.L."/>
            <person name="Cuomo C.A."/>
            <person name="Dewar K."/>
            <person name="FitzGerald M.G."/>
            <person name="Kodira C.D."/>
            <person name="Madan A."/>
            <person name="Qin S."/>
            <person name="Yang X."/>
            <person name="Abbasi N."/>
            <person name="Abouelleil A."/>
            <person name="Arachchi H.M."/>
            <person name="Baradarani L."/>
            <person name="Birditt B."/>
            <person name="Bloom S."/>
            <person name="Bloom T."/>
            <person name="Borowsky M.L."/>
            <person name="Burke J."/>
            <person name="Butler J."/>
            <person name="Cook A."/>
            <person name="DeArellano K."/>
            <person name="DeCaprio D."/>
            <person name="Dorris L. III"/>
            <person name="Dors M."/>
            <person name="Eichler E.E."/>
            <person name="Engels R."/>
            <person name="Fahey J."/>
            <person name="Fleetwood P."/>
            <person name="Friedman C."/>
            <person name="Gearin G."/>
            <person name="Hall J.L."/>
            <person name="Hensley G."/>
            <person name="Johnson E."/>
            <person name="Jones C."/>
            <person name="Kamat A."/>
            <person name="Kaur A."/>
            <person name="Locke D.P."/>
            <person name="Madan A."/>
            <person name="Munson G."/>
            <person name="Jaffe D.B."/>
            <person name="Lui A."/>
            <person name="Macdonald P."/>
            <person name="Mauceli E."/>
            <person name="Naylor J.W."/>
            <person name="Nesbitt R."/>
            <person name="Nicol R."/>
            <person name="O'Leary S.B."/>
            <person name="Ratcliffe A."/>
            <person name="Rounsley S."/>
            <person name="She X."/>
            <person name="Sneddon K.M.B."/>
            <person name="Stewart S."/>
            <person name="Sougnez C."/>
            <person name="Stone S.M."/>
            <person name="Topham K."/>
            <person name="Vincent D."/>
            <person name="Wang S."/>
            <person name="Zimmer A.R."/>
            <person name="Birren B.W."/>
            <person name="Hood L."/>
            <person name="Lander E.S."/>
            <person name="Nusbaum C."/>
        </authorList>
    </citation>
    <scope>NUCLEOTIDE SEQUENCE [LARGE SCALE GENOMIC DNA]</scope>
</reference>
<reference key="4">
    <citation type="journal article" date="2004" name="Genome Res.">
        <title>The status, quality, and expansion of the NIH full-length cDNA project: the Mammalian Gene Collection (MGC).</title>
        <authorList>
            <consortium name="The MGC Project Team"/>
        </authorList>
    </citation>
    <scope>NUCLEOTIDE SEQUENCE [LARGE SCALE MRNA] OF 1-467 (ISOFORM 1)</scope>
    <source>
        <tissue>Skeletal muscle</tissue>
    </source>
</reference>
<reference key="5">
    <citation type="journal article" date="2007" name="BMC Genomics">
        <title>The full-ORF clone resource of the German cDNA consortium.</title>
        <authorList>
            <person name="Bechtel S."/>
            <person name="Rosenfelder H."/>
            <person name="Duda A."/>
            <person name="Schmidt C.P."/>
            <person name="Ernst U."/>
            <person name="Wellenreuther R."/>
            <person name="Mehrle A."/>
            <person name="Schuster C."/>
            <person name="Bahr A."/>
            <person name="Bloecker H."/>
            <person name="Heubner D."/>
            <person name="Hoerlein A."/>
            <person name="Michel G."/>
            <person name="Wedler H."/>
            <person name="Koehrer K."/>
            <person name="Ottenwaelder B."/>
            <person name="Poustka A."/>
            <person name="Wiemann S."/>
            <person name="Schupp I."/>
        </authorList>
    </citation>
    <scope>NUCLEOTIDE SEQUENCE [LARGE SCALE MRNA] OF 544-1883 (ISOFORM 1)</scope>
    <source>
        <tissue>Skeletal muscle</tissue>
    </source>
</reference>
<reference key="6">
    <citation type="journal article" date="2006" name="Cell">
        <title>Global, in vivo, and site-specific phosphorylation dynamics in signaling networks.</title>
        <authorList>
            <person name="Olsen J.V."/>
            <person name="Blagoev B."/>
            <person name="Gnad F."/>
            <person name="Macek B."/>
            <person name="Kumar C."/>
            <person name="Mortensen P."/>
            <person name="Mann M."/>
        </authorList>
    </citation>
    <scope>IDENTIFICATION BY MASS SPECTROMETRY [LARGE SCALE ANALYSIS]</scope>
    <source>
        <tissue>Cervix carcinoma</tissue>
    </source>
</reference>
<reference key="7">
    <citation type="journal article" date="2008" name="Proc. Natl. Acad. Sci. U.S.A.">
        <title>A quantitative atlas of mitotic phosphorylation.</title>
        <authorList>
            <person name="Dephoure N."/>
            <person name="Zhou C."/>
            <person name="Villen J."/>
            <person name="Beausoleil S.A."/>
            <person name="Bakalarski C.E."/>
            <person name="Elledge S.J."/>
            <person name="Gygi S.P."/>
        </authorList>
    </citation>
    <scope>PHOSPHORYLATION [LARGE SCALE ANALYSIS] AT SER-859; SER-861; SER-864; SER-937; THR-1021; SER-1025; SER-1026; SER-1031; SER-1279 AND SER-1328</scope>
    <scope>IDENTIFICATION BY MASS SPECTROMETRY [LARGE SCALE ANALYSIS]</scope>
    <source>
        <tissue>Cervix carcinoma</tissue>
    </source>
</reference>
<reference key="8">
    <citation type="journal article" date="2009" name="Anal. Chem.">
        <title>Lys-N and trypsin cover complementary parts of the phosphoproteome in a refined SCX-based approach.</title>
        <authorList>
            <person name="Gauci S."/>
            <person name="Helbig A.O."/>
            <person name="Slijper M."/>
            <person name="Krijgsveld J."/>
            <person name="Heck A.J."/>
            <person name="Mohammed S."/>
        </authorList>
    </citation>
    <scope>IDENTIFICATION BY MASS SPECTROMETRY [LARGE SCALE ANALYSIS]</scope>
</reference>
<reference key="9">
    <citation type="journal article" date="2009" name="Sci. Signal.">
        <title>Quantitative phosphoproteomic analysis of T cell receptor signaling reveals system-wide modulation of protein-protein interactions.</title>
        <authorList>
            <person name="Mayya V."/>
            <person name="Lundgren D.H."/>
            <person name="Hwang S.-I."/>
            <person name="Rezaul K."/>
            <person name="Wu L."/>
            <person name="Eng J.K."/>
            <person name="Rodionov V."/>
            <person name="Han D.K."/>
        </authorList>
    </citation>
    <scope>PHOSPHORYLATION [LARGE SCALE ANALYSIS] AT SER-590; SER-861; SER-1025; SER-1026; SER-1370 AND THR-1372</scope>
    <scope>IDENTIFICATION BY MASS SPECTROMETRY [LARGE SCALE ANALYSIS]</scope>
    <source>
        <tissue>Leukemic T-cell</tissue>
    </source>
</reference>
<reference key="10">
    <citation type="journal article" date="2010" name="Sci. Signal.">
        <title>Quantitative phosphoproteomics reveals widespread full phosphorylation site occupancy during mitosis.</title>
        <authorList>
            <person name="Olsen J.V."/>
            <person name="Vermeulen M."/>
            <person name="Santamaria A."/>
            <person name="Kumar C."/>
            <person name="Miller M.L."/>
            <person name="Jensen L.J."/>
            <person name="Gnad F."/>
            <person name="Cox J."/>
            <person name="Jensen T.S."/>
            <person name="Nigg E.A."/>
            <person name="Brunak S."/>
            <person name="Mann M."/>
        </authorList>
    </citation>
    <scope>PHOSPHORYLATION [LARGE SCALE ANALYSIS] AT SER-861; SER-893; SER-1025; SER-1026; SER-1279; SER-1328 AND SER-1370</scope>
    <scope>IDENTIFICATION BY MASS SPECTROMETRY [LARGE SCALE ANALYSIS]</scope>
    <source>
        <tissue>Cervix carcinoma</tissue>
    </source>
</reference>
<reference key="11">
    <citation type="journal article" date="2011" name="Sci. Signal.">
        <title>System-wide temporal characterization of the proteome and phosphoproteome of human embryonic stem cell differentiation.</title>
        <authorList>
            <person name="Rigbolt K.T."/>
            <person name="Prokhorova T.A."/>
            <person name="Akimov V."/>
            <person name="Henningsen J."/>
            <person name="Johansen P.T."/>
            <person name="Kratchmarova I."/>
            <person name="Kassem M."/>
            <person name="Mann M."/>
            <person name="Olsen J.V."/>
            <person name="Blagoev B."/>
        </authorList>
    </citation>
    <scope>PHOSPHORYLATION [LARGE SCALE ANALYSIS] AT SER-1025; SER-1026; SER-1031; SER-1279; SER-1284; SER-1302; SER-1328 AND SER-1370</scope>
    <scope>IDENTIFICATION BY MASS SPECTROMETRY [LARGE SCALE ANALYSIS]</scope>
</reference>
<reference key="12">
    <citation type="journal article" date="2013" name="J. Proteome Res.">
        <title>Toward a comprehensive characterization of a human cancer cell phosphoproteome.</title>
        <authorList>
            <person name="Zhou H."/>
            <person name="Di Palma S."/>
            <person name="Preisinger C."/>
            <person name="Peng M."/>
            <person name="Polat A.N."/>
            <person name="Heck A.J."/>
            <person name="Mohammed S."/>
        </authorList>
    </citation>
    <scope>PHOSPHORYLATION [LARGE SCALE ANALYSIS] AT SER-422; SER-641; SER-661; SER-861; SER-864; SER-893; SER-937; THR-1021; SER-1025; SER-1026; SER-1249; SER-1279; SER-1302; SER-1328; SER-1370; THR-1372 AND SER-1468</scope>
    <scope>IDENTIFICATION BY MASS SPECTROMETRY [LARGE SCALE ANALYSIS]</scope>
    <source>
        <tissue>Cervix carcinoma</tissue>
        <tissue>Erythroleukemia</tissue>
    </source>
</reference>
<reference key="13">
    <citation type="journal article" date="2014" name="J. Proteomics">
        <title>An enzyme assisted RP-RPLC approach for in-depth analysis of human liver phosphoproteome.</title>
        <authorList>
            <person name="Bian Y."/>
            <person name="Song C."/>
            <person name="Cheng K."/>
            <person name="Dong M."/>
            <person name="Wang F."/>
            <person name="Huang J."/>
            <person name="Sun D."/>
            <person name="Wang L."/>
            <person name="Ye M."/>
            <person name="Zou H."/>
        </authorList>
    </citation>
    <scope>IDENTIFICATION BY MASS SPECTROMETRY [LARGE SCALE ANALYSIS]</scope>
    <source>
        <tissue>Liver</tissue>
    </source>
</reference>
<reference key="14">
    <citation type="journal article" date="2014" name="Nat. Struct. Mol. Biol.">
        <title>Uncovering global SUMOylation signaling networks in a site-specific manner.</title>
        <authorList>
            <person name="Hendriks I.A."/>
            <person name="D'Souza R.C."/>
            <person name="Yang B."/>
            <person name="Verlaan-de Vries M."/>
            <person name="Mann M."/>
            <person name="Vertegaal A.C."/>
        </authorList>
    </citation>
    <scope>SUMOYLATION [LARGE SCALE ANALYSIS] AT LYS-133; LYS-371; LYS-775; LYS-911 AND LYS-1737</scope>
    <scope>IDENTIFICATION BY MASS SPECTROMETRY [LARGE SCALE ANALYSIS]</scope>
</reference>
<reference key="15">
    <citation type="journal article" date="2014" name="Proc. Natl. Acad. Sci. U.S.A.">
        <title>Mapping of SUMO sites and analysis of SUMOylation changes induced by external stimuli.</title>
        <authorList>
            <person name="Impens F."/>
            <person name="Radoshevich L."/>
            <person name="Cossart P."/>
            <person name="Ribet D."/>
        </authorList>
    </citation>
    <scope>SUMOYLATION [LARGE SCALE ANALYSIS] AT LYS-1737</scope>
    <scope>IDENTIFICATION BY MASS SPECTROMETRY [LARGE SCALE ANALYSIS]</scope>
</reference>
<reference key="16">
    <citation type="journal article" date="2015" name="Cell Rep.">
        <title>SUMO-2 orchestrates chromatin modifiers in response to DNA damage.</title>
        <authorList>
            <person name="Hendriks I.A."/>
            <person name="Treffers L.W."/>
            <person name="Verlaan-de Vries M."/>
            <person name="Olsen J.V."/>
            <person name="Vertegaal A.C."/>
        </authorList>
    </citation>
    <scope>SUMOYLATION [LARGE SCALE ANALYSIS] AT LYS-356; LYS-371; LYS-775; LYS-911; LYS-1265 AND LYS-1737</scope>
    <scope>IDENTIFICATION BY MASS SPECTROMETRY [LARGE SCALE ANALYSIS]</scope>
</reference>
<reference key="17">
    <citation type="journal article" date="2015" name="Mol. Cell. Proteomics">
        <title>System-wide analysis of SUMOylation dynamics in response to replication stress reveals novel small ubiquitin-like modified target proteins and acceptor lysines relevant for genome stability.</title>
        <authorList>
            <person name="Xiao Z."/>
            <person name="Chang J.G."/>
            <person name="Hendriks I.A."/>
            <person name="Sigurdsson J.O."/>
            <person name="Olsen J.V."/>
            <person name="Vertegaal A.C."/>
        </authorList>
    </citation>
    <scope>SUMOYLATION [LARGE SCALE ANALYSIS] AT LYS-371; LYS-911; LYS-1265 AND LYS-1737</scope>
    <scope>IDENTIFICATION BY MASS SPECTROMETRY [LARGE SCALE ANALYSIS]</scope>
</reference>
<reference key="18">
    <citation type="journal article" date="2017" name="Nat. Struct. Mol. Biol.">
        <title>Site-specific mapping of the human SUMO proteome reveals co-modification with phosphorylation.</title>
        <authorList>
            <person name="Hendriks I.A."/>
            <person name="Lyon D."/>
            <person name="Young C."/>
            <person name="Jensen L.J."/>
            <person name="Vertegaal A.C."/>
            <person name="Nielsen M.L."/>
        </authorList>
    </citation>
    <scope>SUMOYLATION [LARGE SCALE ANALYSIS] AT LYS-69; LYS-76; LYS-133; LYS-243; LYS-287; LYS-305; LYS-356; LYS-365; LYS-371; LYS-417; LYS-451; LYS-461; LYS-477; LYS-492; LYS-505; LYS-515; LYS-525; LYS-539; LYS-557; LYS-603; LYS-671; LYS-684; LYS-705; LYS-721; LYS-741; LYS-775; LYS-807; LYS-905; LYS-911; LYS-953; LYS-1265; LYS-1299; LYS-1324; LYS-1380; LYS-1392; LYS-1395; LYS-1454; LYS-1486; LYS-1504; LYS-1585; LYS-1737 AND LYS-1864</scope>
    <scope>SUMOYLATION [LARGE SCALE ANALYSIS] AT LYS-6 AND LYS-37 (ISOFORM 2)</scope>
    <scope>IDENTIFICATION BY MASS SPECTROMETRY [LARGE SCALE ANALYSIS]</scope>
</reference>
<evidence type="ECO:0000250" key="1">
    <source>
        <dbReference type="UniProtKB" id="O88466"/>
    </source>
</evidence>
<evidence type="ECO:0000256" key="2">
    <source>
        <dbReference type="SAM" id="MobiDB-lite"/>
    </source>
</evidence>
<evidence type="ECO:0000303" key="3">
    <source>
    </source>
</evidence>
<evidence type="ECO:0000305" key="4"/>
<evidence type="ECO:0007744" key="5">
    <source>
    </source>
</evidence>
<evidence type="ECO:0007744" key="6">
    <source>
    </source>
</evidence>
<evidence type="ECO:0007744" key="7">
    <source>
    </source>
</evidence>
<evidence type="ECO:0007744" key="8">
    <source>
    </source>
</evidence>
<evidence type="ECO:0007744" key="9">
    <source>
    </source>
</evidence>
<evidence type="ECO:0007744" key="10">
    <source>
    </source>
</evidence>
<evidence type="ECO:0007744" key="11">
    <source>
    </source>
</evidence>
<evidence type="ECO:0007744" key="12">
    <source>
    </source>
</evidence>
<evidence type="ECO:0007744" key="13">
    <source>
    </source>
</evidence>
<evidence type="ECO:0007744" key="14">
    <source>
    </source>
</evidence>
<keyword id="KW-0025">Alternative splicing</keyword>
<keyword id="KW-1017">Isopeptide bond</keyword>
<keyword id="KW-0479">Metal-binding</keyword>
<keyword id="KW-0539">Nucleus</keyword>
<keyword id="KW-0597">Phosphoprotein</keyword>
<keyword id="KW-1267">Proteomics identification</keyword>
<keyword id="KW-1185">Reference proteome</keyword>
<keyword id="KW-0677">Repeat</keyword>
<keyword id="KW-0832">Ubl conjugation</keyword>
<keyword id="KW-0853">WD repeat</keyword>
<keyword id="KW-0862">Zinc</keyword>
<keyword id="KW-0863">Zinc-finger</keyword>
<feature type="chain" id="PRO_0000051467" description="Zinc finger protein 106">
    <location>
        <begin position="1"/>
        <end position="1883"/>
    </location>
</feature>
<feature type="repeat" description="WD 1">
    <location>
        <begin position="1529"/>
        <end position="1568"/>
    </location>
</feature>
<feature type="repeat" description="WD 2">
    <location>
        <begin position="1570"/>
        <end position="1611"/>
    </location>
</feature>
<feature type="repeat" description="WD 3">
    <location>
        <begin position="1654"/>
        <end position="1695"/>
    </location>
</feature>
<feature type="repeat" description="WD 4">
    <location>
        <begin position="1698"/>
        <end position="1737"/>
    </location>
</feature>
<feature type="repeat" description="WD 5">
    <location>
        <begin position="1738"/>
        <end position="1775"/>
    </location>
</feature>
<feature type="repeat" description="WD 6">
    <location>
        <begin position="1778"/>
        <end position="1815"/>
    </location>
</feature>
<feature type="zinc finger region" description="C2H2-type 1; atypical">
    <location>
        <begin position="20"/>
        <end position="44"/>
    </location>
</feature>
<feature type="zinc finger region" description="C2H2-type 2; atypical">
    <location>
        <begin position="1813"/>
        <end position="1838"/>
    </location>
</feature>
<feature type="region of interest" description="Disordered" evidence="2">
    <location>
        <begin position="39"/>
        <end position="162"/>
    </location>
</feature>
<feature type="region of interest" description="Disordered" evidence="2">
    <location>
        <begin position="322"/>
        <end position="356"/>
    </location>
</feature>
<feature type="region of interest" description="Disordered" evidence="2">
    <location>
        <begin position="389"/>
        <end position="423"/>
    </location>
</feature>
<feature type="region of interest" description="Disordered" evidence="2">
    <location>
        <begin position="457"/>
        <end position="501"/>
    </location>
</feature>
<feature type="region of interest" description="Disordered" evidence="2">
    <location>
        <begin position="586"/>
        <end position="637"/>
    </location>
</feature>
<feature type="region of interest" description="Disordered" evidence="2">
    <location>
        <begin position="879"/>
        <end position="945"/>
    </location>
</feature>
<feature type="region of interest" description="Disordered" evidence="2">
    <location>
        <begin position="958"/>
        <end position="982"/>
    </location>
</feature>
<feature type="region of interest" description="Disordered" evidence="2">
    <location>
        <begin position="997"/>
        <end position="1048"/>
    </location>
</feature>
<feature type="region of interest" description="Disordered" evidence="2">
    <location>
        <begin position="1121"/>
        <end position="1140"/>
    </location>
</feature>
<feature type="region of interest" description="Disordered" evidence="2">
    <location>
        <begin position="1182"/>
        <end position="1218"/>
    </location>
</feature>
<feature type="region of interest" description="Disordered" evidence="2">
    <location>
        <begin position="1252"/>
        <end position="1483"/>
    </location>
</feature>
<feature type="region of interest" description="Disordered" evidence="2">
    <location>
        <begin position="1502"/>
        <end position="1527"/>
    </location>
</feature>
<feature type="compositionally biased region" description="Acidic residues" evidence="2">
    <location>
        <begin position="52"/>
        <end position="67"/>
    </location>
</feature>
<feature type="compositionally biased region" description="Basic and acidic residues" evidence="2">
    <location>
        <begin position="77"/>
        <end position="86"/>
    </location>
</feature>
<feature type="compositionally biased region" description="Basic and acidic residues" evidence="2">
    <location>
        <begin position="96"/>
        <end position="116"/>
    </location>
</feature>
<feature type="compositionally biased region" description="Basic and acidic residues" evidence="2">
    <location>
        <begin position="128"/>
        <end position="138"/>
    </location>
</feature>
<feature type="compositionally biased region" description="Polar residues" evidence="2">
    <location>
        <begin position="139"/>
        <end position="148"/>
    </location>
</feature>
<feature type="compositionally biased region" description="Polar residues" evidence="2">
    <location>
        <begin position="322"/>
        <end position="338"/>
    </location>
</feature>
<feature type="compositionally biased region" description="Polar residues" evidence="2">
    <location>
        <begin position="412"/>
        <end position="423"/>
    </location>
</feature>
<feature type="compositionally biased region" description="Polar residues" evidence="2">
    <location>
        <begin position="461"/>
        <end position="493"/>
    </location>
</feature>
<feature type="compositionally biased region" description="Polar residues" evidence="2">
    <location>
        <begin position="608"/>
        <end position="620"/>
    </location>
</feature>
<feature type="compositionally biased region" description="Polar residues" evidence="2">
    <location>
        <begin position="888"/>
        <end position="906"/>
    </location>
</feature>
<feature type="compositionally biased region" description="Polar residues" evidence="2">
    <location>
        <begin position="958"/>
        <end position="976"/>
    </location>
</feature>
<feature type="compositionally biased region" description="Basic residues" evidence="2">
    <location>
        <begin position="1035"/>
        <end position="1045"/>
    </location>
</feature>
<feature type="compositionally biased region" description="Basic and acidic residues" evidence="2">
    <location>
        <begin position="1255"/>
        <end position="1277"/>
    </location>
</feature>
<feature type="compositionally biased region" description="Polar residues" evidence="2">
    <location>
        <begin position="1278"/>
        <end position="1291"/>
    </location>
</feature>
<feature type="compositionally biased region" description="Polar residues" evidence="2">
    <location>
        <begin position="1299"/>
        <end position="1312"/>
    </location>
</feature>
<feature type="compositionally biased region" description="Polar residues" evidence="2">
    <location>
        <begin position="1333"/>
        <end position="1346"/>
    </location>
</feature>
<feature type="compositionally biased region" description="Basic residues" evidence="2">
    <location>
        <begin position="1349"/>
        <end position="1362"/>
    </location>
</feature>
<feature type="compositionally biased region" description="Basic and acidic residues" evidence="2">
    <location>
        <begin position="1402"/>
        <end position="1416"/>
    </location>
</feature>
<feature type="compositionally biased region" description="Basic and acidic residues" evidence="2">
    <location>
        <begin position="1444"/>
        <end position="1456"/>
    </location>
</feature>
<feature type="compositionally biased region" description="Polar residues" evidence="2">
    <location>
        <begin position="1457"/>
        <end position="1481"/>
    </location>
</feature>
<feature type="compositionally biased region" description="Polar residues" evidence="2">
    <location>
        <begin position="1502"/>
        <end position="1513"/>
    </location>
</feature>
<feature type="modified residue" description="Phosphoserine" evidence="9">
    <location>
        <position position="422"/>
    </location>
</feature>
<feature type="modified residue" description="Phosphoserine" evidence="6">
    <location>
        <position position="590"/>
    </location>
</feature>
<feature type="modified residue" description="Phosphoserine" evidence="9">
    <location>
        <position position="641"/>
    </location>
</feature>
<feature type="modified residue" description="Phosphoserine" evidence="9">
    <location>
        <position position="661"/>
    </location>
</feature>
<feature type="modified residue" description="Phosphoserine" evidence="5">
    <location>
        <position position="859"/>
    </location>
</feature>
<feature type="modified residue" description="Phosphoserine" evidence="5 6 7 9">
    <location>
        <position position="861"/>
    </location>
</feature>
<feature type="modified residue" description="Phosphoserine" evidence="5 9">
    <location>
        <position position="864"/>
    </location>
</feature>
<feature type="modified residue" description="Phosphoserine" evidence="7 9">
    <location>
        <position position="893"/>
    </location>
</feature>
<feature type="modified residue" description="Phosphoserine" evidence="5 9">
    <location>
        <position position="937"/>
    </location>
</feature>
<feature type="modified residue" description="Phosphothreonine" evidence="5 9">
    <location>
        <position position="1021"/>
    </location>
</feature>
<feature type="modified residue" description="Phosphoserine" evidence="5 6 7 8 9">
    <location>
        <position position="1025"/>
    </location>
</feature>
<feature type="modified residue" description="Phosphoserine" evidence="5 6 7 8 9">
    <location>
        <position position="1026"/>
    </location>
</feature>
<feature type="modified residue" description="Phosphoserine" evidence="5 8">
    <location>
        <position position="1031"/>
    </location>
</feature>
<feature type="modified residue" description="Phosphoserine" evidence="9">
    <location>
        <position position="1249"/>
    </location>
</feature>
<feature type="modified residue" description="Phosphoserine" evidence="5 7 8 9">
    <location>
        <position position="1279"/>
    </location>
</feature>
<feature type="modified residue" description="Phosphoserine" evidence="1">
    <location>
        <position position="1281"/>
    </location>
</feature>
<feature type="modified residue" description="Phosphoserine" evidence="8">
    <location>
        <position position="1284"/>
    </location>
</feature>
<feature type="modified residue" description="Phosphoserine" evidence="8 9">
    <location>
        <position position="1302"/>
    </location>
</feature>
<feature type="modified residue" description="Phosphoserine" evidence="5 7 8 9">
    <location>
        <position position="1328"/>
    </location>
</feature>
<feature type="modified residue" description="Phosphoserine" evidence="6 7 8 9">
    <location>
        <position position="1370"/>
    </location>
</feature>
<feature type="modified residue" description="Phosphothreonine" evidence="6 9">
    <location>
        <position position="1372"/>
    </location>
</feature>
<feature type="modified residue" description="Phosphoserine" evidence="9">
    <location>
        <position position="1468"/>
    </location>
</feature>
<feature type="cross-link" description="Glycyl lysine isopeptide (Lys-Gly) (interchain with G-Cter in SUMO2)" evidence="14">
    <location>
        <position position="69"/>
    </location>
</feature>
<feature type="cross-link" description="Glycyl lysine isopeptide (Lys-Gly) (interchain with G-Cter in SUMO2)" evidence="14">
    <location>
        <position position="76"/>
    </location>
</feature>
<feature type="cross-link" description="Glycyl lysine isopeptide (Lys-Gly) (interchain with G-Cter in SUMO2)" evidence="11 14">
    <location>
        <position position="133"/>
    </location>
</feature>
<feature type="cross-link" description="Glycyl lysine isopeptide (Lys-Gly) (interchain with G-Cter in SUMO2)" evidence="14">
    <location>
        <position position="243"/>
    </location>
</feature>
<feature type="cross-link" description="Glycyl lysine isopeptide (Lys-Gly) (interchain with G-Cter in SUMO2)" evidence="14">
    <location>
        <position position="287"/>
    </location>
</feature>
<feature type="cross-link" description="Glycyl lysine isopeptide (Lys-Gly) (interchain with G-Cter in SUMO2)" evidence="14">
    <location>
        <position position="305"/>
    </location>
</feature>
<feature type="cross-link" description="Glycyl lysine isopeptide (Lys-Gly) (interchain with G-Cter in SUMO2)" evidence="13 14">
    <location>
        <position position="356"/>
    </location>
</feature>
<feature type="cross-link" description="Glycyl lysine isopeptide (Lys-Gly) (interchain with G-Cter in SUMO2)" evidence="14">
    <location>
        <position position="365"/>
    </location>
</feature>
<feature type="cross-link" description="Glycyl lysine isopeptide (Lys-Gly) (interchain with G-Cter in SUMO2)" evidence="11 12 13 14">
    <location>
        <position position="371"/>
    </location>
</feature>
<feature type="cross-link" description="Glycyl lysine isopeptide (Lys-Gly) (interchain with G-Cter in SUMO2)" evidence="14">
    <location>
        <position position="417"/>
    </location>
</feature>
<feature type="cross-link" description="Glycyl lysine isopeptide (Lys-Gly) (interchain with G-Cter in SUMO2)" evidence="14">
    <location>
        <position position="451"/>
    </location>
</feature>
<feature type="cross-link" description="Glycyl lysine isopeptide (Lys-Gly) (interchain with G-Cter in SUMO2)" evidence="14">
    <location>
        <position position="461"/>
    </location>
</feature>
<feature type="cross-link" description="Glycyl lysine isopeptide (Lys-Gly) (interchain with G-Cter in SUMO2)" evidence="14">
    <location>
        <position position="477"/>
    </location>
</feature>
<feature type="cross-link" description="Glycyl lysine isopeptide (Lys-Gly) (interchain with G-Cter in SUMO2)" evidence="14">
    <location>
        <position position="492"/>
    </location>
</feature>
<feature type="cross-link" description="Glycyl lysine isopeptide (Lys-Gly) (interchain with G-Cter in SUMO2)" evidence="14">
    <location>
        <position position="505"/>
    </location>
</feature>
<feature type="cross-link" description="Glycyl lysine isopeptide (Lys-Gly) (interchain with G-Cter in SUMO2)" evidence="14">
    <location>
        <position position="515"/>
    </location>
</feature>
<feature type="cross-link" description="Glycyl lysine isopeptide (Lys-Gly) (interchain with G-Cter in SUMO2)" evidence="14">
    <location>
        <position position="525"/>
    </location>
</feature>
<feature type="cross-link" description="Glycyl lysine isopeptide (Lys-Gly) (interchain with G-Cter in SUMO2)" evidence="14">
    <location>
        <position position="539"/>
    </location>
</feature>
<feature type="cross-link" description="Glycyl lysine isopeptide (Lys-Gly) (interchain with G-Cter in SUMO2)" evidence="14">
    <location>
        <position position="557"/>
    </location>
</feature>
<feature type="cross-link" description="Glycyl lysine isopeptide (Lys-Gly) (interchain with G-Cter in SUMO2)" evidence="14">
    <location>
        <position position="603"/>
    </location>
</feature>
<feature type="cross-link" description="Glycyl lysine isopeptide (Lys-Gly) (interchain with G-Cter in SUMO2)" evidence="14">
    <location>
        <position position="671"/>
    </location>
</feature>
<feature type="cross-link" description="Glycyl lysine isopeptide (Lys-Gly) (interchain with G-Cter in SUMO2)" evidence="14">
    <location>
        <position position="684"/>
    </location>
</feature>
<feature type="cross-link" description="Glycyl lysine isopeptide (Lys-Gly) (interchain with G-Cter in SUMO2)" evidence="14">
    <location>
        <position position="705"/>
    </location>
</feature>
<feature type="cross-link" description="Glycyl lysine isopeptide (Lys-Gly) (interchain with G-Cter in SUMO2)" evidence="14">
    <location>
        <position position="721"/>
    </location>
</feature>
<feature type="cross-link" description="Glycyl lysine isopeptide (Lys-Gly) (interchain with G-Cter in SUMO2)" evidence="14">
    <location>
        <position position="741"/>
    </location>
</feature>
<feature type="cross-link" description="Glycyl lysine isopeptide (Lys-Gly) (interchain with G-Cter in SUMO2)" evidence="11 13 14">
    <location>
        <position position="775"/>
    </location>
</feature>
<feature type="cross-link" description="Glycyl lysine isopeptide (Lys-Gly) (interchain with G-Cter in SUMO2)" evidence="14">
    <location>
        <position position="807"/>
    </location>
</feature>
<feature type="cross-link" description="Glycyl lysine isopeptide (Lys-Gly) (interchain with G-Cter in SUMO2)" evidence="14">
    <location>
        <position position="905"/>
    </location>
</feature>
<feature type="cross-link" description="Glycyl lysine isopeptide (Lys-Gly) (interchain with G-Cter in SUMO2)" evidence="11 12 13 14">
    <location>
        <position position="911"/>
    </location>
</feature>
<feature type="cross-link" description="Glycyl lysine isopeptide (Lys-Gly) (interchain with G-Cter in SUMO2)" evidence="14">
    <location>
        <position position="953"/>
    </location>
</feature>
<feature type="cross-link" description="Glycyl lysine isopeptide (Lys-Gly) (interchain with G-Cter in SUMO2)" evidence="12 13 14">
    <location>
        <position position="1265"/>
    </location>
</feature>
<feature type="cross-link" description="Glycyl lysine isopeptide (Lys-Gly) (interchain with G-Cter in SUMO2)" evidence="14">
    <location>
        <position position="1299"/>
    </location>
</feature>
<feature type="cross-link" description="Glycyl lysine isopeptide (Lys-Gly) (interchain with G-Cter in SUMO2)" evidence="14">
    <location>
        <position position="1324"/>
    </location>
</feature>
<feature type="cross-link" description="Glycyl lysine isopeptide (Lys-Gly) (interchain with G-Cter in SUMO2)" evidence="14">
    <location>
        <position position="1380"/>
    </location>
</feature>
<feature type="cross-link" description="Glycyl lysine isopeptide (Lys-Gly) (interchain with G-Cter in SUMO2)" evidence="14">
    <location>
        <position position="1392"/>
    </location>
</feature>
<feature type="cross-link" description="Glycyl lysine isopeptide (Lys-Gly) (interchain with G-Cter in SUMO2)" evidence="14">
    <location>
        <position position="1395"/>
    </location>
</feature>
<feature type="cross-link" description="Glycyl lysine isopeptide (Lys-Gly) (interchain with G-Cter in SUMO2)" evidence="14">
    <location>
        <position position="1454"/>
    </location>
</feature>
<feature type="cross-link" description="Glycyl lysine isopeptide (Lys-Gly) (interchain with G-Cter in SUMO2)" evidence="14">
    <location>
        <position position="1486"/>
    </location>
</feature>
<feature type="cross-link" description="Glycyl lysine isopeptide (Lys-Gly) (interchain with G-Cter in SUMO2)" evidence="14">
    <location>
        <position position="1504"/>
    </location>
</feature>
<feature type="cross-link" description="Glycyl lysine isopeptide (Lys-Gly) (interchain with G-Cter in SUMO2)" evidence="14">
    <location>
        <position position="1585"/>
    </location>
</feature>
<feature type="cross-link" description="Glycyl lysine isopeptide (Lys-Gly) (interchain with G-Cter in SUMO2)" evidence="10 11 12 13 14">
    <location>
        <position position="1737"/>
    </location>
</feature>
<feature type="cross-link" description="Glycyl lysine isopeptide (Lys-Gly) (interchain with G-Cter in SUMO2)" evidence="14">
    <location>
        <position position="1864"/>
    </location>
</feature>
<feature type="splice variant" id="VSP_057120" description="In isoform 2." evidence="3">
    <original>MPVGRIECPSSPSFPRDISHECRVCGVTEVGLSAYAKH</original>
    <variation>MVRERKCILCHIVYSSKKEMDEHMRSMLHHRELENLKG</variation>
    <location>
        <begin position="1"/>
        <end position="38"/>
    </location>
</feature>
<feature type="splice variant" id="VSP_057121" description="In isoform 2." evidence="3">
    <location>
        <begin position="39"/>
        <end position="810"/>
    </location>
</feature>
<feature type="sequence variant" id="VAR_053440" description="In dbSNP:rs12440118.">
    <original>W</original>
    <variation>R</variation>
    <location>
        <position position="103"/>
    </location>
</feature>
<feature type="sequence variant" id="VAR_053441" description="In dbSNP:rs12101559.">
    <original>I</original>
    <variation>T</variation>
    <location>
        <position position="646"/>
    </location>
</feature>
<feature type="sequence variant" id="VAR_053442" description="In dbSNP:rs34792942.">
    <original>M</original>
    <variation>V</variation>
    <location>
        <position position="656"/>
    </location>
</feature>
<feature type="sequence variant" id="VAR_053443" description="In dbSNP:rs34983340.">
    <original>P</original>
    <variation>T</variation>
    <location>
        <position position="1162"/>
    </location>
</feature>
<feature type="sequence conflict" description="In Ref. 2; BAB71475." evidence="4" ref="2">
    <original>N</original>
    <variation>D</variation>
    <location>
        <position position="475"/>
    </location>
</feature>
<feature type="sequence conflict" description="In Ref. 5; CAD91147." evidence="4" ref="5">
    <original>D</original>
    <variation>G</variation>
    <location>
        <position position="680"/>
    </location>
</feature>
<feature type="sequence conflict" description="In Ref. 2; BAB71475." evidence="4" ref="2">
    <original>I</original>
    <variation>V</variation>
    <location>
        <position position="757"/>
    </location>
</feature>
<feature type="sequence conflict" description="In Ref. 5; CAD91142." evidence="4" ref="5">
    <original>E</original>
    <variation>G</variation>
    <location>
        <position position="1293"/>
    </location>
</feature>
<feature type="sequence conflict" description="In Ref. 2; BAG63952." evidence="4" ref="2">
    <original>S</original>
    <variation>P</variation>
    <location>
        <position position="1509"/>
    </location>
</feature>
<feature type="sequence conflict" description="In Ref. 2; BAB14976." evidence="4" ref="2">
    <original>R</original>
    <variation>L</variation>
    <location>
        <position position="1606"/>
    </location>
</feature>
<feature type="cross-link" description="Glycyl lysine isopeptide (Lys-Gly) (interchain with G-Cter in SUMO2)" evidence="14">
    <location sequence="Q9H2Y7-2">
        <position position="6"/>
    </location>
</feature>
<feature type="cross-link" description="Glycyl lysine isopeptide (Lys-Gly) (interchain with G-Cter in SUMO2)" evidence="14">
    <location sequence="Q9H2Y7-2">
        <position position="37"/>
    </location>
</feature>
<accession>Q9H2Y7</accession>
<accession>B4DZ40</accession>
<accession>E9PE29</accession>
<accession>Q6NSD9</accession>
<accession>Q6PEK1</accession>
<accession>Q86T43</accession>
<accession>Q86T45</accession>
<accession>Q86T50</accession>
<accession>Q86T58</accession>
<accession>Q86TA9</accession>
<accession>Q96M37</accession>
<accession>Q9H7B8</accession>
<name>ZN106_HUMAN</name>
<gene>
    <name type="primary">ZNF106</name>
    <name type="synonym">SH3BP3</name>
    <name type="synonym">ZFP106</name>
    <name type="synonym">ZNF474</name>
</gene>
<dbReference type="EMBL" id="AF205632">
    <property type="protein sequence ID" value="AAG35666.1"/>
    <property type="molecule type" value="mRNA"/>
</dbReference>
<dbReference type="EMBL" id="AF209502">
    <property type="protein sequence ID" value="AAL40184.1"/>
    <property type="molecule type" value="Genomic_DNA"/>
</dbReference>
<dbReference type="EMBL" id="AK024726">
    <property type="protein sequence ID" value="BAB14976.1"/>
    <property type="status" value="ALT_INIT"/>
    <property type="molecule type" value="mRNA"/>
</dbReference>
<dbReference type="EMBL" id="AK057410">
    <property type="protein sequence ID" value="BAB71475.1"/>
    <property type="molecule type" value="mRNA"/>
</dbReference>
<dbReference type="EMBL" id="AK302735">
    <property type="protein sequence ID" value="BAG63952.1"/>
    <property type="molecule type" value="mRNA"/>
</dbReference>
<dbReference type="EMBL" id="AC012651">
    <property type="status" value="NOT_ANNOTATED_CDS"/>
    <property type="molecule type" value="Genomic_DNA"/>
</dbReference>
<dbReference type="EMBL" id="AC018362">
    <property type="status" value="NOT_ANNOTATED_CDS"/>
    <property type="molecule type" value="Genomic_DNA"/>
</dbReference>
<dbReference type="EMBL" id="BC058023">
    <property type="protein sequence ID" value="AAH58023.1"/>
    <property type="status" value="ALT_SEQ"/>
    <property type="molecule type" value="mRNA"/>
</dbReference>
<dbReference type="EMBL" id="BC070244">
    <property type="protein sequence ID" value="AAH70244.1"/>
    <property type="status" value="ALT_SEQ"/>
    <property type="molecule type" value="mRNA"/>
</dbReference>
<dbReference type="EMBL" id="AL832455">
    <property type="protein sequence ID" value="CAD89926.1"/>
    <property type="molecule type" value="mRNA"/>
</dbReference>
<dbReference type="EMBL" id="AL831983">
    <property type="protein sequence ID" value="CAD91134.1"/>
    <property type="status" value="ALT_INIT"/>
    <property type="molecule type" value="mRNA"/>
</dbReference>
<dbReference type="EMBL" id="AL833301">
    <property type="protein sequence ID" value="CAD91142.1"/>
    <property type="molecule type" value="mRNA"/>
</dbReference>
<dbReference type="EMBL" id="AL832014">
    <property type="protein sequence ID" value="CAD91147.1"/>
    <property type="molecule type" value="mRNA"/>
</dbReference>
<dbReference type="EMBL" id="AL832352">
    <property type="protein sequence ID" value="CAD91149.1"/>
    <property type="molecule type" value="mRNA"/>
</dbReference>
<dbReference type="CCDS" id="CCDS32208.1">
    <molecule id="Q9H2Y7-1"/>
</dbReference>
<dbReference type="CCDS" id="CCDS61603.1">
    <molecule id="Q9H2Y7-2"/>
</dbReference>
<dbReference type="RefSeq" id="NP_001271235.1">
    <property type="nucleotide sequence ID" value="NM_001284306.1"/>
</dbReference>
<dbReference type="RefSeq" id="NP_001271236.1">
    <molecule id="Q9H2Y7-2"/>
    <property type="nucleotide sequence ID" value="NM_001284307.4"/>
</dbReference>
<dbReference type="RefSeq" id="NP_071918.1">
    <molecule id="Q9H2Y7-1"/>
    <property type="nucleotide sequence ID" value="NM_022473.3"/>
</dbReference>
<dbReference type="SMR" id="Q9H2Y7"/>
<dbReference type="BioGRID" id="122154">
    <property type="interactions" value="85"/>
</dbReference>
<dbReference type="FunCoup" id="Q9H2Y7">
    <property type="interactions" value="865"/>
</dbReference>
<dbReference type="IntAct" id="Q9H2Y7">
    <property type="interactions" value="61"/>
</dbReference>
<dbReference type="MINT" id="Q9H2Y7"/>
<dbReference type="STRING" id="9606.ENSP00000263805"/>
<dbReference type="GlyCosmos" id="Q9H2Y7">
    <property type="glycosylation" value="1 site, 1 glycan"/>
</dbReference>
<dbReference type="GlyGen" id="Q9H2Y7">
    <property type="glycosylation" value="8 sites, 3 N-linked glycans (3 sites), 1 O-linked glycan (5 sites)"/>
</dbReference>
<dbReference type="iPTMnet" id="Q9H2Y7"/>
<dbReference type="PhosphoSitePlus" id="Q9H2Y7"/>
<dbReference type="SwissPalm" id="Q9H2Y7"/>
<dbReference type="BioMuta" id="ZNF106"/>
<dbReference type="DMDM" id="51702191"/>
<dbReference type="jPOST" id="Q9H2Y7"/>
<dbReference type="MassIVE" id="Q9H2Y7"/>
<dbReference type="PaxDb" id="9606-ENSP00000263805"/>
<dbReference type="PeptideAtlas" id="Q9H2Y7"/>
<dbReference type="ProteomicsDB" id="19800"/>
<dbReference type="ProteomicsDB" id="80634">
    <molecule id="Q9H2Y7-1"/>
</dbReference>
<dbReference type="Pumba" id="Q9H2Y7"/>
<dbReference type="Antibodypedia" id="10821">
    <property type="antibodies" value="99 antibodies from 24 providers"/>
</dbReference>
<dbReference type="DNASU" id="64397"/>
<dbReference type="Ensembl" id="ENST00000263805.8">
    <molecule id="Q9H2Y7-1"/>
    <property type="protein sequence ID" value="ENSP00000263805.4"/>
    <property type="gene ID" value="ENSG00000103994.18"/>
</dbReference>
<dbReference type="Ensembl" id="ENST00000565380.5">
    <molecule id="Q9H2Y7-2"/>
    <property type="protein sequence ID" value="ENSP00000455674.1"/>
    <property type="gene ID" value="ENSG00000103994.18"/>
</dbReference>
<dbReference type="GeneID" id="64397"/>
<dbReference type="KEGG" id="hsa:64397"/>
<dbReference type="UCSC" id="uc001zpv.5">
    <molecule id="Q9H2Y7-1"/>
    <property type="organism name" value="human"/>
</dbReference>
<dbReference type="AGR" id="HGNC:12886"/>
<dbReference type="CTD" id="64397"/>
<dbReference type="DisGeNET" id="64397"/>
<dbReference type="GeneCards" id="ZNF106"/>
<dbReference type="HGNC" id="HGNC:12886">
    <property type="gene designation" value="ZNF106"/>
</dbReference>
<dbReference type="HPA" id="ENSG00000103994">
    <property type="expression patterns" value="Group enriched (heart muscle, skeletal muscle, tongue)"/>
</dbReference>
<dbReference type="MIM" id="603988">
    <property type="type" value="gene"/>
</dbReference>
<dbReference type="neXtProt" id="NX_Q9H2Y7"/>
<dbReference type="OpenTargets" id="ENSG00000103994"/>
<dbReference type="PharmGKB" id="PA166048944"/>
<dbReference type="VEuPathDB" id="HostDB:ENSG00000103994"/>
<dbReference type="eggNOG" id="KOG1721">
    <property type="taxonomic scope" value="Eukaryota"/>
</dbReference>
<dbReference type="GeneTree" id="ENSGT00940000157336"/>
<dbReference type="HOGENOM" id="CLU_001566_0_0_1"/>
<dbReference type="InParanoid" id="Q9H2Y7"/>
<dbReference type="OrthoDB" id="10002522at2759"/>
<dbReference type="PAN-GO" id="Q9H2Y7">
    <property type="GO annotations" value="4 GO annotations based on evolutionary models"/>
</dbReference>
<dbReference type="PhylomeDB" id="Q9H2Y7"/>
<dbReference type="TreeFam" id="TF105569"/>
<dbReference type="PathwayCommons" id="Q9H2Y7"/>
<dbReference type="SignaLink" id="Q9H2Y7"/>
<dbReference type="BioGRID-ORCS" id="64397">
    <property type="hits" value="23 hits in 1163 CRISPR screens"/>
</dbReference>
<dbReference type="CD-CODE" id="91857CE7">
    <property type="entry name" value="Nucleolus"/>
</dbReference>
<dbReference type="ChiTaRS" id="ZNF106">
    <property type="organism name" value="human"/>
</dbReference>
<dbReference type="GeneWiki" id="ZFP106"/>
<dbReference type="GenomeRNAi" id="64397"/>
<dbReference type="Pharos" id="Q9H2Y7">
    <property type="development level" value="Tbio"/>
</dbReference>
<dbReference type="PRO" id="PR:Q9H2Y7"/>
<dbReference type="Proteomes" id="UP000005640">
    <property type="component" value="Chromosome 15"/>
</dbReference>
<dbReference type="RNAct" id="Q9H2Y7">
    <property type="molecule type" value="protein"/>
</dbReference>
<dbReference type="Bgee" id="ENSG00000103994">
    <property type="expression patterns" value="Expressed in skeletal muscle tissue of rectus abdominis and 206 other cell types or tissues"/>
</dbReference>
<dbReference type="ExpressionAtlas" id="Q9H2Y7">
    <property type="expression patterns" value="baseline and differential"/>
</dbReference>
<dbReference type="GO" id="GO:0005829">
    <property type="term" value="C:cytosol"/>
    <property type="evidence" value="ECO:0000318"/>
    <property type="project" value="GO_Central"/>
</dbReference>
<dbReference type="GO" id="GO:0016020">
    <property type="term" value="C:membrane"/>
    <property type="evidence" value="ECO:0000318"/>
    <property type="project" value="GO_Central"/>
</dbReference>
<dbReference type="GO" id="GO:0016607">
    <property type="term" value="C:nuclear speck"/>
    <property type="evidence" value="ECO:0007669"/>
    <property type="project" value="UniProtKB-SubCell"/>
</dbReference>
<dbReference type="GO" id="GO:0005730">
    <property type="term" value="C:nucleolus"/>
    <property type="evidence" value="ECO:0007669"/>
    <property type="project" value="UniProtKB-SubCell"/>
</dbReference>
<dbReference type="GO" id="GO:0003723">
    <property type="term" value="F:RNA binding"/>
    <property type="evidence" value="ECO:0007005"/>
    <property type="project" value="UniProtKB"/>
</dbReference>
<dbReference type="GO" id="GO:0008270">
    <property type="term" value="F:zinc ion binding"/>
    <property type="evidence" value="ECO:0007669"/>
    <property type="project" value="UniProtKB-KW"/>
</dbReference>
<dbReference type="GO" id="GO:0008286">
    <property type="term" value="P:insulin receptor signaling pathway"/>
    <property type="evidence" value="ECO:0000318"/>
    <property type="project" value="GO_Central"/>
</dbReference>
<dbReference type="CDD" id="cd00200">
    <property type="entry name" value="WD40"/>
    <property type="match status" value="1"/>
</dbReference>
<dbReference type="DisProt" id="DP02007"/>
<dbReference type="FunFam" id="2.130.10.10:FF:000195">
    <property type="entry name" value="Zinc finger protein 106"/>
    <property type="match status" value="1"/>
</dbReference>
<dbReference type="FunFam" id="2.130.10.10:FF:000114">
    <property type="entry name" value="zinc finger protein 106 isoform X1"/>
    <property type="match status" value="1"/>
</dbReference>
<dbReference type="Gene3D" id="2.130.10.10">
    <property type="entry name" value="YVTN repeat-like/Quinoprotein amine dehydrogenase"/>
    <property type="match status" value="2"/>
</dbReference>
<dbReference type="InterPro" id="IPR015943">
    <property type="entry name" value="WD40/YVTN_repeat-like_dom_sf"/>
</dbReference>
<dbReference type="InterPro" id="IPR036322">
    <property type="entry name" value="WD40_repeat_dom_sf"/>
</dbReference>
<dbReference type="InterPro" id="IPR001680">
    <property type="entry name" value="WD40_rpt"/>
</dbReference>
<dbReference type="InterPro" id="IPR042622">
    <property type="entry name" value="Znf106"/>
</dbReference>
<dbReference type="InterPro" id="IPR013087">
    <property type="entry name" value="Znf_C2H2_type"/>
</dbReference>
<dbReference type="PANTHER" id="PTHR14435">
    <property type="entry name" value="ZINC FINGER PROTEIN 106"/>
    <property type="match status" value="1"/>
</dbReference>
<dbReference type="PANTHER" id="PTHR14435:SF2">
    <property type="entry name" value="ZINC FINGER PROTEIN 106"/>
    <property type="match status" value="1"/>
</dbReference>
<dbReference type="Pfam" id="PF00400">
    <property type="entry name" value="WD40"/>
    <property type="match status" value="5"/>
</dbReference>
<dbReference type="SMART" id="SM00320">
    <property type="entry name" value="WD40"/>
    <property type="match status" value="6"/>
</dbReference>
<dbReference type="SMART" id="SM00355">
    <property type="entry name" value="ZnF_C2H2"/>
    <property type="match status" value="3"/>
</dbReference>
<dbReference type="SUPFAM" id="SSF50978">
    <property type="entry name" value="WD40 repeat-like"/>
    <property type="match status" value="1"/>
</dbReference>
<dbReference type="PROSITE" id="PS50082">
    <property type="entry name" value="WD_REPEATS_2"/>
    <property type="match status" value="2"/>
</dbReference>
<dbReference type="PROSITE" id="PS50294">
    <property type="entry name" value="WD_REPEATS_REGION"/>
    <property type="match status" value="1"/>
</dbReference>
<dbReference type="PROSITE" id="PS00028">
    <property type="entry name" value="ZINC_FINGER_C2H2_1"/>
    <property type="match status" value="1"/>
</dbReference>
<comment type="function">
    <text evidence="1">RNA-binding protein. Specifically binds to 5'-GGGGCC-3' sequence repeats in RNA. Essential for maintenance of peripheral motor neuron and skeletal muscle function. Required for normal expression and/or alternative splicing of a number of genes in spinal cord and skeletal muscle, including the neurite outgrowth inhibitor RTN4. Also contributes to normal mitochondrial respiratory function in motor neurons, via an unknown mechanism.</text>
</comment>
<comment type="subunit">
    <text evidence="1">Interacts with KNOP1. Interacts with TARDBP and NUP107. Interacts (via N-terminus) with RBM39. Interacts with the SH3 domains of FYN and GRB2.</text>
</comment>
<comment type="subcellular location">
    <subcellularLocation>
        <location evidence="1">Nucleus</location>
        <location evidence="1">Nucleolus</location>
    </subcellularLocation>
    <subcellularLocation>
        <location evidence="1">Nucleus speckle</location>
    </subcellularLocation>
    <text evidence="1">Colocalizes with RBM39 in nuclear speckles. Inhibition of RNA synthesis, or overexpression of KNOP1, induces translocation from nuclear speckles to the nucleolus.</text>
</comment>
<comment type="alternative products">
    <event type="alternative splicing"/>
    <isoform>
        <id>Q9H2Y7-1</id>
        <name>1</name>
        <sequence type="displayed"/>
    </isoform>
    <isoform>
        <id>Q9H2Y7-2</id>
        <name>2</name>
        <sequence type="described" ref="VSP_057120 VSP_057121"/>
    </isoform>
</comment>
<comment type="PTM">
    <text evidence="1">Phosphorylated by FYN in vitro.</text>
</comment>
<comment type="sequence caution" evidence="4">
    <conflict type="miscellaneous discrepancy">
        <sequence resource="EMBL-CDS" id="AAH58023"/>
    </conflict>
    <text>Contaminating sequence. Potential poly-A sequence.</text>
</comment>
<comment type="sequence caution" evidence="4">
    <conflict type="miscellaneous discrepancy">
        <sequence resource="EMBL-CDS" id="AAH70244"/>
    </conflict>
    <text>Contaminating sequence. Potential poly-A sequence.</text>
</comment>
<comment type="sequence caution" evidence="4">
    <conflict type="erroneous initiation">
        <sequence resource="EMBL-CDS" id="BAB14976"/>
    </conflict>
    <text>Truncated N-terminus.</text>
</comment>
<comment type="sequence caution" evidence="4">
    <conflict type="erroneous initiation">
        <sequence resource="EMBL-CDS" id="CAD91134"/>
    </conflict>
    <text>Truncated N-terminus.</text>
</comment>
<protein>
    <recommendedName>
        <fullName>Zinc finger protein 106</fullName>
        <shortName>Zfp-106</shortName>
    </recommendedName>
    <alternativeName>
        <fullName>Zinc finger protein 474</fullName>
    </alternativeName>
</protein>
<sequence length="1883" mass="208883">MPVGRIECPSSPSFPRDISHECRVCGVTEVGLSAYAKHISGQLHKDNVDAQEREDDGKGEEEEEDYFDKELIQLIKQRKEQSRQDEPSNSNQEINSDDRRPQWRREDRIPYQDRESYSQPAWHHRGPPQRDWKWEKDGFNNTRKNSFPHSLRNGGGPRGRSGWHKGVAGGSSTWFHNHSNSGGGWLSNSGAVDWNHNGTGRNSSWLSEGTGGFSSWHMNNSNGNWKSSVRSTNNWNYSGPGDKFQPGRNRNSNCQMEDMTMLWNKKSNKSNKYSHDRYNWQRQENDKLGTVATYRGPSEGFTSDKFPSEGLLDFNFEQLESQTTKQADTATSKVSGKNGSAAREKPRRWTPYPSQKTLDLQSGLKDITGNKSEMIEKPLFDFSLITTGIQEPQTDETRNSPTQKTQKEIHTGSLNHKASSDSAASFEVVRQCPTAEKPEQEHTPNKMPSLKSPLLPCPATKSLSQKQDPKNISKNTKTNFFSPGEHSNPSNKPTVEDNHGPYISKLRSSCPHVLKGNKSTFGSQKQSGDNLNDTLRKAKEVLQCHESLQNPLLSTSKSTRNYAKASRNVEESEKGSLKIEFQVHALEDESDGETSDTEKHGTKIGTLGSATTELLSGSTRTADEKEEDDRILKTSRELSTSPCNPIVRQKESELQMTSAASPHPGLLLDLKTSLEDAQVDDSIKSHVSYETEGFESASLDAELQKSDISQPSGPLLPELSKLGFPASLQRDLTRHISLKSKTGVHLPEPNLNSARRIRNISGHRKSETEKESGLKPTLRQILNASRRNVNWEQVIQQVTKKKQELGKGLPRFGIEMVPLVQNEQEALDLDGEPDLSSLEGFQWEGVSISSSPGLARKRSLSESSVIMDRAPSVYSFFSEEGTGKENEPQQMVSPSNSLRAGQSQKATMHLKQEVTPRAASLRTGERAENVATQRRHSAQLSSDHIIPLMHLAKDLNSQERSIPPSENQNSQESNGEGNCLSSSASSALAISSLADAATDSSCTSGAEQNDGQSIRKKRRATGDGSSPELPSLERKNKRRKIKGKKERSQVDQLLNISLREEELSKSLQCMDNNLLQARAALQTAYVEVQRLLMLKQQITMEMSALRTHRIQILQGLQETYEPSEHPDQVPCSLTRERRNSRSQTSIDAALLPTPFFPLFLEPPSSHVSPSPTGASLQITTSPTFQTHGSVPAPDSSVQIKQEPMSPEQDENVNAVPPSSACNVSKELLEANREISDSCPVYPVITARLSLPESTESFHEPSQELKFSVEQRNTRNRENSPSSQSAGLSSINKEGEEPTKGNSGSEACTSSFLRLSFASETPLEKEPHSPADQPEQQAESTLTSAETRGSKKKKKLRKKKSLRAAHVPENSDTEQDVLTVKPVRKVKAGKLIKGGKVTTSTWEDSRTGREQESVRDEPDSDSSLEVLEIPNPQLEVVAIDSSESGEEKPDSPSKKDIWNSTEQNPLETSRSGCDEVSSTSEIGTRYKDGIPVSVAETQTVISSIKGSKNSSEISSEPGDDDEPTEGSFEGHQAAVNAIQIFGNLLYTCSADKTVRVYNLVSRKCIGVFEGHTSKVNCLLVTQTSGKNAALYTGSSDHTIRCYNVKSRECVEQLQLEDRVLCLHSRWRILYAGLANGTVVTFNIKNNKRLEIFECHGPRAVSCLATAQEGARKLLVVGSYDCTISVRDARNGLLLRTLEGHSKTILCMKVVNDLVFSGSSDQSVHAHNIHTGELVRIYKGHNHAVTVVNILGKVMVTACLDKFVRVYELQSHDRLQVYGGHKDMIMCMTIHKSMIYTGCYDGSIQAVRLNLMQNYRCWWHGCSLIFGVVDHLKQHLLTDHTNPNFQTLKCRWKNCDAFFTARKGSKQDAAGHIERHAEDDSKIDS</sequence>